<reference key="1">
    <citation type="journal article" date="2002" name="Nature">
        <title>The genome sequence of Schizosaccharomyces pombe.</title>
        <authorList>
            <person name="Wood V."/>
            <person name="Gwilliam R."/>
            <person name="Rajandream M.A."/>
            <person name="Lyne M.H."/>
            <person name="Lyne R."/>
            <person name="Stewart A."/>
            <person name="Sgouros J.G."/>
            <person name="Peat N."/>
            <person name="Hayles J."/>
            <person name="Baker S.G."/>
            <person name="Basham D."/>
            <person name="Bowman S."/>
            <person name="Brooks K."/>
            <person name="Brown D."/>
            <person name="Brown S."/>
            <person name="Chillingworth T."/>
            <person name="Churcher C.M."/>
            <person name="Collins M."/>
            <person name="Connor R."/>
            <person name="Cronin A."/>
            <person name="Davis P."/>
            <person name="Feltwell T."/>
            <person name="Fraser A."/>
            <person name="Gentles S."/>
            <person name="Goble A."/>
            <person name="Hamlin N."/>
            <person name="Harris D.E."/>
            <person name="Hidalgo J."/>
            <person name="Hodgson G."/>
            <person name="Holroyd S."/>
            <person name="Hornsby T."/>
            <person name="Howarth S."/>
            <person name="Huckle E.J."/>
            <person name="Hunt S."/>
            <person name="Jagels K."/>
            <person name="James K.D."/>
            <person name="Jones L."/>
            <person name="Jones M."/>
            <person name="Leather S."/>
            <person name="McDonald S."/>
            <person name="McLean J."/>
            <person name="Mooney P."/>
            <person name="Moule S."/>
            <person name="Mungall K.L."/>
            <person name="Murphy L.D."/>
            <person name="Niblett D."/>
            <person name="Odell C."/>
            <person name="Oliver K."/>
            <person name="O'Neil S."/>
            <person name="Pearson D."/>
            <person name="Quail M.A."/>
            <person name="Rabbinowitsch E."/>
            <person name="Rutherford K.M."/>
            <person name="Rutter S."/>
            <person name="Saunders D."/>
            <person name="Seeger K."/>
            <person name="Sharp S."/>
            <person name="Skelton J."/>
            <person name="Simmonds M.N."/>
            <person name="Squares R."/>
            <person name="Squares S."/>
            <person name="Stevens K."/>
            <person name="Taylor K."/>
            <person name="Taylor R.G."/>
            <person name="Tivey A."/>
            <person name="Walsh S.V."/>
            <person name="Warren T."/>
            <person name="Whitehead S."/>
            <person name="Woodward J.R."/>
            <person name="Volckaert G."/>
            <person name="Aert R."/>
            <person name="Robben J."/>
            <person name="Grymonprez B."/>
            <person name="Weltjens I."/>
            <person name="Vanstreels E."/>
            <person name="Rieger M."/>
            <person name="Schaefer M."/>
            <person name="Mueller-Auer S."/>
            <person name="Gabel C."/>
            <person name="Fuchs M."/>
            <person name="Duesterhoeft A."/>
            <person name="Fritzc C."/>
            <person name="Holzer E."/>
            <person name="Moestl D."/>
            <person name="Hilbert H."/>
            <person name="Borzym K."/>
            <person name="Langer I."/>
            <person name="Beck A."/>
            <person name="Lehrach H."/>
            <person name="Reinhardt R."/>
            <person name="Pohl T.M."/>
            <person name="Eger P."/>
            <person name="Zimmermann W."/>
            <person name="Wedler H."/>
            <person name="Wambutt R."/>
            <person name="Purnelle B."/>
            <person name="Goffeau A."/>
            <person name="Cadieu E."/>
            <person name="Dreano S."/>
            <person name="Gloux S."/>
            <person name="Lelaure V."/>
            <person name="Mottier S."/>
            <person name="Galibert F."/>
            <person name="Aves S.J."/>
            <person name="Xiang Z."/>
            <person name="Hunt C."/>
            <person name="Moore K."/>
            <person name="Hurst S.M."/>
            <person name="Lucas M."/>
            <person name="Rochet M."/>
            <person name="Gaillardin C."/>
            <person name="Tallada V.A."/>
            <person name="Garzon A."/>
            <person name="Thode G."/>
            <person name="Daga R.R."/>
            <person name="Cruzado L."/>
            <person name="Jimenez J."/>
            <person name="Sanchez M."/>
            <person name="del Rey F."/>
            <person name="Benito J."/>
            <person name="Dominguez A."/>
            <person name="Revuelta J.L."/>
            <person name="Moreno S."/>
            <person name="Armstrong J."/>
            <person name="Forsburg S.L."/>
            <person name="Cerutti L."/>
            <person name="Lowe T."/>
            <person name="McCombie W.R."/>
            <person name="Paulsen I."/>
            <person name="Potashkin J."/>
            <person name="Shpakovski G.V."/>
            <person name="Ussery D."/>
            <person name="Barrell B.G."/>
            <person name="Nurse P."/>
        </authorList>
    </citation>
    <scope>NUCLEOTIDE SEQUENCE [LARGE SCALE GENOMIC DNA]</scope>
    <source>
        <strain>972 / ATCC 24843</strain>
    </source>
</reference>
<reference key="2">
    <citation type="journal article" date="2011" name="Science">
        <title>Comparative functional genomics of the fission yeasts.</title>
        <authorList>
            <person name="Rhind N."/>
            <person name="Chen Z."/>
            <person name="Yassour M."/>
            <person name="Thompson D.A."/>
            <person name="Haas B.J."/>
            <person name="Habib N."/>
            <person name="Wapinski I."/>
            <person name="Roy S."/>
            <person name="Lin M.F."/>
            <person name="Heiman D.I."/>
            <person name="Young S.K."/>
            <person name="Furuya K."/>
            <person name="Guo Y."/>
            <person name="Pidoux A."/>
            <person name="Chen H.M."/>
            <person name="Robbertse B."/>
            <person name="Goldberg J.M."/>
            <person name="Aoki K."/>
            <person name="Bayne E.H."/>
            <person name="Berlin A.M."/>
            <person name="Desjardins C.A."/>
            <person name="Dobbs E."/>
            <person name="Dukaj L."/>
            <person name="Fan L."/>
            <person name="FitzGerald M.G."/>
            <person name="French C."/>
            <person name="Gujja S."/>
            <person name="Hansen K."/>
            <person name="Keifenheim D."/>
            <person name="Levin J.Z."/>
            <person name="Mosher R.A."/>
            <person name="Mueller C.A."/>
            <person name="Pfiffner J."/>
            <person name="Priest M."/>
            <person name="Russ C."/>
            <person name="Smialowska A."/>
            <person name="Swoboda P."/>
            <person name="Sykes S.M."/>
            <person name="Vaughn M."/>
            <person name="Vengrova S."/>
            <person name="Yoder R."/>
            <person name="Zeng Q."/>
            <person name="Allshire R."/>
            <person name="Baulcombe D."/>
            <person name="Birren B.W."/>
            <person name="Brown W."/>
            <person name="Ekwall K."/>
            <person name="Kellis M."/>
            <person name="Leatherwood J."/>
            <person name="Levin H."/>
            <person name="Margalit H."/>
            <person name="Martienssen R."/>
            <person name="Nieduszynski C.A."/>
            <person name="Spatafora J.W."/>
            <person name="Friedman N."/>
            <person name="Dalgaard J.Z."/>
            <person name="Baumann P."/>
            <person name="Niki H."/>
            <person name="Regev A."/>
            <person name="Nusbaum C."/>
        </authorList>
    </citation>
    <scope>REVISION OF GENE MODEL</scope>
</reference>
<reference key="3">
    <citation type="journal article" date="2014" name="Nat. Struct. Mol. Biol.">
        <title>The translational landscape of fission-yeast meiosis and sporulation.</title>
        <authorList>
            <person name="Duncan C.D."/>
            <person name="Mata J."/>
        </authorList>
    </citation>
    <scope>ALTERNATIVE SPLICING</scope>
</reference>
<proteinExistence type="inferred from homology"/>
<gene>
    <name type="primary">plb3</name>
    <name evidence="5" type="ORF">SPAC1A6.03c</name>
</gene>
<comment type="function">
    <text evidence="1">Catalyzes the release of fatty acids from lysophospholipids.</text>
</comment>
<comment type="catalytic activity">
    <reaction>
        <text>a 1-acyl-sn-glycero-3-phosphocholine + H2O = sn-glycerol 3-phosphocholine + a fatty acid + H(+)</text>
        <dbReference type="Rhea" id="RHEA:15177"/>
        <dbReference type="ChEBI" id="CHEBI:15377"/>
        <dbReference type="ChEBI" id="CHEBI:15378"/>
        <dbReference type="ChEBI" id="CHEBI:16870"/>
        <dbReference type="ChEBI" id="CHEBI:28868"/>
        <dbReference type="ChEBI" id="CHEBI:58168"/>
        <dbReference type="EC" id="3.1.1.5"/>
    </reaction>
</comment>
<comment type="subcellular location">
    <subcellularLocation>
        <location evidence="4">Secreted</location>
    </subcellularLocation>
</comment>
<comment type="alternative products">
    <event type="alternative splicing"/>
    <isoform>
        <id>O13857-1</id>
        <name>1</name>
        <sequence type="displayed"/>
    </isoform>
    <isoform>
        <id>O13857-2</id>
        <name>2</name>
        <sequence type="described" ref="VSP_058508"/>
    </isoform>
</comment>
<comment type="similarity">
    <text evidence="4">Belongs to the lysophospholipase family.</text>
</comment>
<keyword id="KW-0025">Alternative splicing</keyword>
<keyword id="KW-0325">Glycoprotein</keyword>
<keyword id="KW-0378">Hydrolase</keyword>
<keyword id="KW-0442">Lipid degradation</keyword>
<keyword id="KW-0443">Lipid metabolism</keyword>
<keyword id="KW-1185">Reference proteome</keyword>
<keyword id="KW-0964">Secreted</keyword>
<keyword id="KW-0732">Signal</keyword>
<organism>
    <name type="scientific">Schizosaccharomyces pombe (strain 972 / ATCC 24843)</name>
    <name type="common">Fission yeast</name>
    <dbReference type="NCBI Taxonomy" id="284812"/>
    <lineage>
        <taxon>Eukaryota</taxon>
        <taxon>Fungi</taxon>
        <taxon>Dikarya</taxon>
        <taxon>Ascomycota</taxon>
        <taxon>Taphrinomycotina</taxon>
        <taxon>Schizosaccharomycetes</taxon>
        <taxon>Schizosaccharomycetales</taxon>
        <taxon>Schizosaccharomycetaceae</taxon>
        <taxon>Schizosaccharomyces</taxon>
    </lineage>
</organism>
<name>PLB3_SCHPO</name>
<protein>
    <recommendedName>
        <fullName>Probable lysophospholipase 3</fullName>
        <ecNumber>3.1.1.5</ecNumber>
    </recommendedName>
    <alternativeName>
        <fullName>Phospholipase B</fullName>
    </alternativeName>
</protein>
<evidence type="ECO:0000250" key="1"/>
<evidence type="ECO:0000255" key="2"/>
<evidence type="ECO:0000255" key="3">
    <source>
        <dbReference type="PROSITE-ProRule" id="PRU00555"/>
    </source>
</evidence>
<evidence type="ECO:0000305" key="4"/>
<evidence type="ECO:0000312" key="5">
    <source>
        <dbReference type="PomBase" id="SPAC1A6.03c"/>
    </source>
</evidence>
<feature type="signal peptide" evidence="2">
    <location>
        <begin position="1"/>
        <end position="19"/>
    </location>
</feature>
<feature type="chain" id="PRO_0000024641" description="Probable lysophospholipase 3">
    <location>
        <begin position="20"/>
        <end position="662"/>
    </location>
</feature>
<feature type="domain" description="PLA2c" evidence="3">
    <location>
        <begin position="76"/>
        <end position="617"/>
    </location>
</feature>
<feature type="glycosylation site" description="N-linked (GlcNAc...) asparagine" evidence="2">
    <location>
        <position position="74"/>
    </location>
</feature>
<feature type="glycosylation site" description="N-linked (GlcNAc...) asparagine" evidence="2">
    <location>
        <position position="127"/>
    </location>
</feature>
<feature type="glycosylation site" description="N-linked (GlcNAc...) asparagine" evidence="2">
    <location>
        <position position="162"/>
    </location>
</feature>
<feature type="glycosylation site" description="N-linked (GlcNAc...) asparagine" evidence="2">
    <location>
        <position position="196"/>
    </location>
</feature>
<feature type="glycosylation site" description="N-linked (GlcNAc...) asparagine" evidence="2">
    <location>
        <position position="266"/>
    </location>
</feature>
<feature type="glycosylation site" description="N-linked (GlcNAc...) asparagine" evidence="2">
    <location>
        <position position="274"/>
    </location>
</feature>
<feature type="glycosylation site" description="N-linked (GlcNAc...) asparagine" evidence="2">
    <location>
        <position position="303"/>
    </location>
</feature>
<feature type="glycosylation site" description="N-linked (GlcNAc...) asparagine" evidence="2">
    <location>
        <position position="376"/>
    </location>
</feature>
<feature type="glycosylation site" description="N-linked (GlcNAc...) asparagine" evidence="2">
    <location>
        <position position="406"/>
    </location>
</feature>
<feature type="glycosylation site" description="N-linked (GlcNAc...) asparagine" evidence="2">
    <location>
        <position position="411"/>
    </location>
</feature>
<feature type="glycosylation site" description="N-linked (GlcNAc...) asparagine" evidence="2">
    <location>
        <position position="483"/>
    </location>
</feature>
<feature type="glycosylation site" description="N-linked (GlcNAc...) asparagine" evidence="2">
    <location>
        <position position="518"/>
    </location>
</feature>
<feature type="glycosylation site" description="N-linked (GlcNAc...) asparagine" evidence="2">
    <location>
        <position position="523"/>
    </location>
</feature>
<feature type="glycosylation site" description="N-linked (GlcNAc...) asparagine" evidence="2">
    <location>
        <position position="547"/>
    </location>
</feature>
<feature type="glycosylation site" description="N-linked (GlcNAc...) asparagine" evidence="2">
    <location>
        <position position="556"/>
    </location>
</feature>
<feature type="glycosylation site" description="N-linked (GlcNAc...) asparagine" evidence="2">
    <location>
        <position position="574"/>
    </location>
</feature>
<feature type="glycosylation site" description="N-linked (GlcNAc...) asparagine" evidence="2">
    <location>
        <position position="596"/>
    </location>
</feature>
<feature type="glycosylation site" description="N-linked (GlcNAc...) asparagine" evidence="2">
    <location>
        <position position="613"/>
    </location>
</feature>
<feature type="splice variant" id="VSP_058508" description="In isoform 2.">
    <original>VRAKPIVFYLFASLLTVSLLL</original>
    <variation>TTKASPTHTPWYESLFDLKELKSID</variation>
    <location>
        <begin position="642"/>
        <end position="662"/>
    </location>
</feature>
<accession>O13857</accession>
<accession>A0AAN2H746</accession>
<sequence>MLFNCFGILALLQILPALAYPPCREQMSDPYEFGESDLMRPGMHDTPLSLMQKREALAISLSKRDSVGSYAPYNVTCPSDYMLRPASDGISSGEQSFIDKRIPKINTQMRSFISNTGLDVDVNSVINDSDGPRLGLAFSGGGLRAMVHGGGVLNAFDSRNGNGSSLAGILQSAMYIAGLSGGSWLVGSVAVNNFANITYLRDNVWNLEHSVFAPHGDNVVENLAYYDDLDDEIDQKKDAGFDTSLTDLWGRALSRKLVDATQGGPNITFSSIRNQTWFQNADYPYPIIISDSRLEEEKAIPANTSIFEFTPYEFGTWDNGIKAFLPMEYVGTHLKNGVPPDHKCIRNYDNAGFVMGTSATLFNTFLLEWSQEVTSNSTLYDIIHKVFEKLSEDQNDIAPYPNPYQNFTTTNTTVKNPFERFDTIDLVDGGEDDENIPIWPLLHPQRFVDVIFAVDATYDDSNGWPDGSSIVTTYERIITYNANKSVDVRGFPYIPDEDTIISLGLNTHPTFFGCDGRNTTAGNHTVDNNTPPLLVYFPNYPWVYYSNISTFTMSMNDTLSSGILENAALSATQNNSDSFAVCLACAMIQRSLERKNMSTPSQCSSCFEQYCWNGTTVNNPSAVSNYAPTVLSASTTSGTSSVRAKPIVFYLFASLLTVSLLL</sequence>
<dbReference type="EC" id="3.1.1.5"/>
<dbReference type="EMBL" id="CU329670">
    <property type="protein sequence ID" value="CAK9837406.1"/>
    <property type="molecule type" value="Genomic_DNA"/>
</dbReference>
<dbReference type="PIR" id="T38006">
    <property type="entry name" value="T38006"/>
</dbReference>
<dbReference type="RefSeq" id="NP_593194.3">
    <property type="nucleotide sequence ID" value="NM_001018590.3"/>
</dbReference>
<dbReference type="SMR" id="O13857"/>
<dbReference type="BioGRID" id="278694">
    <property type="interactions" value="122"/>
</dbReference>
<dbReference type="FunCoup" id="O13857">
    <property type="interactions" value="202"/>
</dbReference>
<dbReference type="STRING" id="284812.O13857"/>
<dbReference type="iPTMnet" id="O13857"/>
<dbReference type="PaxDb" id="4896-SPAC1A6.03c.1"/>
<dbReference type="EnsemblFungi" id="SPAC1A6.03c.1">
    <molecule id="O13857-1"/>
    <property type="protein sequence ID" value="SPAC1A6.03c.1:pep"/>
    <property type="gene ID" value="SPAC1A6.03c"/>
</dbReference>
<dbReference type="PomBase" id="SPAC1A6.03c">
    <property type="gene designation" value="plb3"/>
</dbReference>
<dbReference type="VEuPathDB" id="FungiDB:SPAC1A6.03c"/>
<dbReference type="eggNOG" id="KOG1325">
    <property type="taxonomic scope" value="Eukaryota"/>
</dbReference>
<dbReference type="HOGENOM" id="CLU_014602_0_0_1"/>
<dbReference type="InParanoid" id="O13857"/>
<dbReference type="OMA" id="FGHINMS"/>
<dbReference type="Reactome" id="R-SPO-111995">
    <property type="pathway name" value="phospho-PLA2 pathway"/>
</dbReference>
<dbReference type="Reactome" id="R-SPO-1482788">
    <property type="pathway name" value="Acyl chain remodelling of PC"/>
</dbReference>
<dbReference type="Reactome" id="R-SPO-1482798">
    <property type="pathway name" value="Acyl chain remodeling of CL"/>
</dbReference>
<dbReference type="Reactome" id="R-SPO-1482801">
    <property type="pathway name" value="Acyl chain remodelling of PS"/>
</dbReference>
<dbReference type="Reactome" id="R-SPO-1482839">
    <property type="pathway name" value="Acyl chain remodelling of PE"/>
</dbReference>
<dbReference type="Reactome" id="R-SPO-1482922">
    <property type="pathway name" value="Acyl chain remodelling of PI"/>
</dbReference>
<dbReference type="Reactome" id="R-SPO-1482925">
    <property type="pathway name" value="Acyl chain remodelling of PG"/>
</dbReference>
<dbReference type="Reactome" id="R-SPO-1483115">
    <property type="pathway name" value="Hydrolysis of LPC"/>
</dbReference>
<dbReference type="Reactome" id="R-SPO-1483152">
    <property type="pathway name" value="Hydrolysis of LPE"/>
</dbReference>
<dbReference type="Reactome" id="R-SPO-1483166">
    <property type="pathway name" value="Synthesis of PA"/>
</dbReference>
<dbReference type="Reactome" id="R-SPO-2142753">
    <property type="pathway name" value="Arachidonate metabolism"/>
</dbReference>
<dbReference type="Reactome" id="R-SPO-418592">
    <property type="pathway name" value="ADP signalling through P2Y purinoceptor 1"/>
</dbReference>
<dbReference type="Reactome" id="R-SPO-432142">
    <property type="pathway name" value="Platelet sensitization by LDL"/>
</dbReference>
<dbReference type="Reactome" id="R-SPO-6811436">
    <property type="pathway name" value="COPI-independent Golgi-to-ER retrograde traffic"/>
</dbReference>
<dbReference type="PRO" id="PR:O13857"/>
<dbReference type="Proteomes" id="UP000002485">
    <property type="component" value="Chromosome I"/>
</dbReference>
<dbReference type="GO" id="GO:0005737">
    <property type="term" value="C:cytoplasm"/>
    <property type="evidence" value="ECO:0007005"/>
    <property type="project" value="PomBase"/>
</dbReference>
<dbReference type="GO" id="GO:0005829">
    <property type="term" value="C:cytosol"/>
    <property type="evidence" value="ECO:0000318"/>
    <property type="project" value="GO_Central"/>
</dbReference>
<dbReference type="GO" id="GO:0005783">
    <property type="term" value="C:endoplasmic reticulum"/>
    <property type="evidence" value="ECO:0000318"/>
    <property type="project" value="GO_Central"/>
</dbReference>
<dbReference type="GO" id="GO:0009897">
    <property type="term" value="C:external side of plasma membrane"/>
    <property type="evidence" value="ECO:0000305"/>
    <property type="project" value="PomBase"/>
</dbReference>
<dbReference type="GO" id="GO:0005576">
    <property type="term" value="C:extracellular region"/>
    <property type="evidence" value="ECO:0007669"/>
    <property type="project" value="UniProtKB-KW"/>
</dbReference>
<dbReference type="GO" id="GO:0009277">
    <property type="term" value="C:fungal-type cell wall"/>
    <property type="evidence" value="ECO:0000250"/>
    <property type="project" value="PomBase"/>
</dbReference>
<dbReference type="GO" id="GO:0004622">
    <property type="term" value="F:lysophospholipase activity"/>
    <property type="evidence" value="ECO:0000266"/>
    <property type="project" value="PomBase"/>
</dbReference>
<dbReference type="GO" id="GO:0004623">
    <property type="term" value="F:phospholipase A2 activity"/>
    <property type="evidence" value="ECO:0000318"/>
    <property type="project" value="GO_Central"/>
</dbReference>
<dbReference type="GO" id="GO:0004620">
    <property type="term" value="F:phospholipase activity"/>
    <property type="evidence" value="ECO:0007669"/>
    <property type="project" value="InterPro"/>
</dbReference>
<dbReference type="GO" id="GO:0046475">
    <property type="term" value="P:glycerophospholipid catabolic process"/>
    <property type="evidence" value="ECO:0000318"/>
    <property type="project" value="GO_Central"/>
</dbReference>
<dbReference type="GO" id="GO:0009395">
    <property type="term" value="P:phospholipid catabolic process"/>
    <property type="evidence" value="ECO:0007669"/>
    <property type="project" value="InterPro"/>
</dbReference>
<dbReference type="CDD" id="cd07203">
    <property type="entry name" value="cPLA2_Fungal_PLB"/>
    <property type="match status" value="1"/>
</dbReference>
<dbReference type="FunFam" id="3.40.1090.10:FF:000010">
    <property type="entry name" value="Lysophospholipase"/>
    <property type="match status" value="1"/>
</dbReference>
<dbReference type="Gene3D" id="3.40.1090.10">
    <property type="entry name" value="Cytosolic phospholipase A2 catalytic domain"/>
    <property type="match status" value="1"/>
</dbReference>
<dbReference type="InterPro" id="IPR016035">
    <property type="entry name" value="Acyl_Trfase/lysoPLipase"/>
</dbReference>
<dbReference type="InterPro" id="IPR002642">
    <property type="entry name" value="LysoPLipase_cat_dom"/>
</dbReference>
<dbReference type="PANTHER" id="PTHR10728">
    <property type="entry name" value="CYTOSOLIC PHOSPHOLIPASE A2"/>
    <property type="match status" value="1"/>
</dbReference>
<dbReference type="PANTHER" id="PTHR10728:SF33">
    <property type="entry name" value="LYSOPHOSPHOLIPASE 1-RELATED"/>
    <property type="match status" value="1"/>
</dbReference>
<dbReference type="Pfam" id="PF01735">
    <property type="entry name" value="PLA2_B"/>
    <property type="match status" value="1"/>
</dbReference>
<dbReference type="SMART" id="SM00022">
    <property type="entry name" value="PLAc"/>
    <property type="match status" value="1"/>
</dbReference>
<dbReference type="SUPFAM" id="SSF52151">
    <property type="entry name" value="FabD/lysophospholipase-like"/>
    <property type="match status" value="1"/>
</dbReference>
<dbReference type="PROSITE" id="PS51210">
    <property type="entry name" value="PLA2C"/>
    <property type="match status" value="1"/>
</dbReference>